<sequence>MKIGIVGAMAQEVEILKNLMADRTETRVASAVIFEGKINGKDVVLLQSGIGKVAAAIGTTALLQLAKPDLVINTGSAGGVAKGLKVGDIVISDETRYHDADVTAFGYEKGQLPANPAAFLSDKKLADLAQEIAEKQGQSVKRGLICSGDSFINSEDKITQIKADFPNVTGVEMEATAIAQVCYAFNVPFVVVRAISDGGDGKASISFEEFLPLAAKQSSALVLEMIDRL</sequence>
<reference key="1">
    <citation type="journal article" date="2007" name="Genome Biol.">
        <title>Characterization and modeling of the Haemophilus influenzae core and supragenomes based on the complete genomic sequences of Rd and 12 clinical nontypeable strains.</title>
        <authorList>
            <person name="Hogg J.S."/>
            <person name="Hu F.Z."/>
            <person name="Janto B."/>
            <person name="Boissy R."/>
            <person name="Hayes J."/>
            <person name="Keefe R."/>
            <person name="Post J.C."/>
            <person name="Ehrlich G.D."/>
        </authorList>
    </citation>
    <scope>NUCLEOTIDE SEQUENCE [LARGE SCALE GENOMIC DNA]</scope>
    <source>
        <strain>PittEE</strain>
    </source>
</reference>
<organism>
    <name type="scientific">Haemophilus influenzae (strain PittEE)</name>
    <dbReference type="NCBI Taxonomy" id="374930"/>
    <lineage>
        <taxon>Bacteria</taxon>
        <taxon>Pseudomonadati</taxon>
        <taxon>Pseudomonadota</taxon>
        <taxon>Gammaproteobacteria</taxon>
        <taxon>Pasteurellales</taxon>
        <taxon>Pasteurellaceae</taxon>
        <taxon>Haemophilus</taxon>
    </lineage>
</organism>
<name>MTNN_HAEIE</name>
<keyword id="KW-0028">Amino-acid biosynthesis</keyword>
<keyword id="KW-0378">Hydrolase</keyword>
<keyword id="KW-0486">Methionine biosynthesis</keyword>
<comment type="function">
    <text evidence="1">Catalyzes the irreversible cleavage of the glycosidic bond in both 5'-methylthioadenosine (MTA) and S-adenosylhomocysteine (SAH/AdoHcy) to adenine and the corresponding thioribose, 5'-methylthioribose and S-ribosylhomocysteine, respectively. Also cleaves 5'-deoxyadenosine, a toxic by-product of radical S-adenosylmethionine (SAM) enzymes, into 5-deoxyribose and adenine.</text>
</comment>
<comment type="catalytic activity">
    <reaction evidence="1">
        <text>S-adenosyl-L-homocysteine + H2O = S-(5-deoxy-D-ribos-5-yl)-L-homocysteine + adenine</text>
        <dbReference type="Rhea" id="RHEA:17805"/>
        <dbReference type="ChEBI" id="CHEBI:15377"/>
        <dbReference type="ChEBI" id="CHEBI:16708"/>
        <dbReference type="ChEBI" id="CHEBI:57856"/>
        <dbReference type="ChEBI" id="CHEBI:58195"/>
        <dbReference type="EC" id="3.2.2.9"/>
    </reaction>
</comment>
<comment type="catalytic activity">
    <reaction evidence="1">
        <text>S-methyl-5'-thioadenosine + H2O = 5-(methylsulfanyl)-D-ribose + adenine</text>
        <dbReference type="Rhea" id="RHEA:13617"/>
        <dbReference type="ChEBI" id="CHEBI:15377"/>
        <dbReference type="ChEBI" id="CHEBI:16708"/>
        <dbReference type="ChEBI" id="CHEBI:17509"/>
        <dbReference type="ChEBI" id="CHEBI:78440"/>
        <dbReference type="EC" id="3.2.2.9"/>
    </reaction>
</comment>
<comment type="catalytic activity">
    <reaction evidence="1">
        <text>5'-deoxyadenosine + H2O = 5-deoxy-D-ribose + adenine</text>
        <dbReference type="Rhea" id="RHEA:29859"/>
        <dbReference type="ChEBI" id="CHEBI:15377"/>
        <dbReference type="ChEBI" id="CHEBI:16708"/>
        <dbReference type="ChEBI" id="CHEBI:17319"/>
        <dbReference type="ChEBI" id="CHEBI:149540"/>
        <dbReference type="EC" id="3.2.2.9"/>
    </reaction>
    <physiologicalReaction direction="left-to-right" evidence="1">
        <dbReference type="Rhea" id="RHEA:29860"/>
    </physiologicalReaction>
</comment>
<comment type="pathway">
    <text evidence="1">Amino-acid biosynthesis; L-methionine biosynthesis via salvage pathway; S-methyl-5-thio-alpha-D-ribose 1-phosphate from S-methyl-5'-thioadenosine (hydrolase route): step 1/2.</text>
</comment>
<comment type="similarity">
    <text evidence="1">Belongs to the PNP/UDP phosphorylase family. MtnN subfamily.</text>
</comment>
<gene>
    <name evidence="1" type="primary">mtnN</name>
    <name type="ordered locus">CGSHiEE_05950</name>
</gene>
<dbReference type="EC" id="3.2.2.9" evidence="1"/>
<dbReference type="EMBL" id="CP000671">
    <property type="protein sequence ID" value="ABQ98545.1"/>
    <property type="molecule type" value="Genomic_DNA"/>
</dbReference>
<dbReference type="SMR" id="A5UCP4"/>
<dbReference type="KEGG" id="hip:CGSHiEE_05950"/>
<dbReference type="HOGENOM" id="CLU_031248_2_2_6"/>
<dbReference type="UniPathway" id="UPA00904">
    <property type="reaction ID" value="UER00871"/>
</dbReference>
<dbReference type="GO" id="GO:0005829">
    <property type="term" value="C:cytosol"/>
    <property type="evidence" value="ECO:0007669"/>
    <property type="project" value="TreeGrafter"/>
</dbReference>
<dbReference type="GO" id="GO:0008782">
    <property type="term" value="F:adenosylhomocysteine nucleosidase activity"/>
    <property type="evidence" value="ECO:0007669"/>
    <property type="project" value="UniProtKB-UniRule"/>
</dbReference>
<dbReference type="GO" id="GO:0008930">
    <property type="term" value="F:methylthioadenosine nucleosidase activity"/>
    <property type="evidence" value="ECO:0007669"/>
    <property type="project" value="UniProtKB-UniRule"/>
</dbReference>
<dbReference type="GO" id="GO:0019509">
    <property type="term" value="P:L-methionine salvage from methylthioadenosine"/>
    <property type="evidence" value="ECO:0007669"/>
    <property type="project" value="UniProtKB-UniRule"/>
</dbReference>
<dbReference type="GO" id="GO:0019284">
    <property type="term" value="P:L-methionine salvage from S-adenosylmethionine"/>
    <property type="evidence" value="ECO:0007669"/>
    <property type="project" value="TreeGrafter"/>
</dbReference>
<dbReference type="GO" id="GO:0009164">
    <property type="term" value="P:nucleoside catabolic process"/>
    <property type="evidence" value="ECO:0007669"/>
    <property type="project" value="InterPro"/>
</dbReference>
<dbReference type="CDD" id="cd09008">
    <property type="entry name" value="MTAN"/>
    <property type="match status" value="1"/>
</dbReference>
<dbReference type="FunFam" id="3.40.50.1580:FF:000001">
    <property type="entry name" value="MTA/SAH nucleosidase family protein"/>
    <property type="match status" value="1"/>
</dbReference>
<dbReference type="Gene3D" id="3.40.50.1580">
    <property type="entry name" value="Nucleoside phosphorylase domain"/>
    <property type="match status" value="1"/>
</dbReference>
<dbReference type="HAMAP" id="MF_01684">
    <property type="entry name" value="Salvage_MtnN"/>
    <property type="match status" value="1"/>
</dbReference>
<dbReference type="InterPro" id="IPR010049">
    <property type="entry name" value="MTA_SAH_Nsdase"/>
</dbReference>
<dbReference type="InterPro" id="IPR000845">
    <property type="entry name" value="Nucleoside_phosphorylase_d"/>
</dbReference>
<dbReference type="InterPro" id="IPR035994">
    <property type="entry name" value="Nucleoside_phosphorylase_sf"/>
</dbReference>
<dbReference type="NCBIfam" id="TIGR01704">
    <property type="entry name" value="MTA_SAH-Nsdase"/>
    <property type="match status" value="1"/>
</dbReference>
<dbReference type="NCBIfam" id="NF004079">
    <property type="entry name" value="PRK05584.1"/>
    <property type="match status" value="1"/>
</dbReference>
<dbReference type="PANTHER" id="PTHR46832">
    <property type="entry name" value="5'-METHYLTHIOADENOSINE/S-ADENOSYLHOMOCYSTEINE NUCLEOSIDASE"/>
    <property type="match status" value="1"/>
</dbReference>
<dbReference type="PANTHER" id="PTHR46832:SF1">
    <property type="entry name" value="5'-METHYLTHIOADENOSINE_S-ADENOSYLHOMOCYSTEINE NUCLEOSIDASE"/>
    <property type="match status" value="1"/>
</dbReference>
<dbReference type="Pfam" id="PF01048">
    <property type="entry name" value="PNP_UDP_1"/>
    <property type="match status" value="1"/>
</dbReference>
<dbReference type="SUPFAM" id="SSF53167">
    <property type="entry name" value="Purine and uridine phosphorylases"/>
    <property type="match status" value="1"/>
</dbReference>
<proteinExistence type="inferred from homology"/>
<evidence type="ECO:0000255" key="1">
    <source>
        <dbReference type="HAMAP-Rule" id="MF_01684"/>
    </source>
</evidence>
<feature type="chain" id="PRO_0000359306" description="5'-methylthioadenosine/S-adenosylhomocysteine nucleosidase">
    <location>
        <begin position="1"/>
        <end position="229"/>
    </location>
</feature>
<feature type="active site" description="Proton acceptor" evidence="1">
    <location>
        <position position="12"/>
    </location>
</feature>
<feature type="active site" description="Proton donor" evidence="1">
    <location>
        <position position="197"/>
    </location>
</feature>
<feature type="binding site" evidence="1">
    <location>
        <position position="78"/>
    </location>
    <ligand>
        <name>substrate</name>
    </ligand>
</feature>
<feature type="binding site" evidence="1">
    <location>
        <position position="152"/>
    </location>
    <ligand>
        <name>substrate</name>
    </ligand>
</feature>
<feature type="binding site" evidence="1">
    <location>
        <begin position="173"/>
        <end position="174"/>
    </location>
    <ligand>
        <name>substrate</name>
    </ligand>
</feature>
<accession>A5UCP4</accession>
<protein>
    <recommendedName>
        <fullName evidence="1">5'-methylthioadenosine/S-adenosylhomocysteine nucleosidase</fullName>
        <shortName evidence="1">MTA/SAH nucleosidase</shortName>
        <shortName evidence="1">MTAN</shortName>
        <ecNumber evidence="1">3.2.2.9</ecNumber>
    </recommendedName>
    <alternativeName>
        <fullName evidence="1">5'-deoxyadenosine nucleosidase</fullName>
        <shortName evidence="1">DOA nucleosidase</shortName>
        <shortName evidence="1">dAdo nucleosidase</shortName>
    </alternativeName>
    <alternativeName>
        <fullName evidence="1">5'-methylthioadenosine nucleosidase</fullName>
        <shortName evidence="1">MTA nucleosidase</shortName>
    </alternativeName>
    <alternativeName>
        <fullName evidence="1">S-adenosylhomocysteine nucleosidase</fullName>
        <shortName evidence="1">AdoHcy nucleosidase</shortName>
        <shortName evidence="1">SAH nucleosidase</shortName>
        <shortName evidence="1">SRH nucleosidase</shortName>
    </alternativeName>
</protein>